<keyword id="KW-0687">Ribonucleoprotein</keyword>
<keyword id="KW-0689">Ribosomal protein</keyword>
<keyword id="KW-0694">RNA-binding</keyword>
<keyword id="KW-0699">rRNA-binding</keyword>
<comment type="function">
    <text evidence="1">Binds the lower part of the 30S subunit head. Binds mRNA in the 70S ribosome, positioning it for translation.</text>
</comment>
<comment type="subunit">
    <text evidence="1">Part of the 30S ribosomal subunit. Forms a tight complex with proteins S10 and S14.</text>
</comment>
<comment type="similarity">
    <text evidence="1">Belongs to the universal ribosomal protein uS3 family.</text>
</comment>
<dbReference type="EMBL" id="CP000013">
    <property type="protein sequence ID" value="AAU07335.1"/>
    <property type="molecule type" value="Genomic_DNA"/>
</dbReference>
<dbReference type="RefSeq" id="WP_011193803.1">
    <property type="nucleotide sequence ID" value="NZ_CP028872.1"/>
</dbReference>
<dbReference type="SMR" id="Q661D6"/>
<dbReference type="GeneID" id="45161279"/>
<dbReference type="KEGG" id="bga:BG0496"/>
<dbReference type="eggNOG" id="COG0092">
    <property type="taxonomic scope" value="Bacteria"/>
</dbReference>
<dbReference type="HOGENOM" id="CLU_058591_0_2_12"/>
<dbReference type="OrthoDB" id="9806396at2"/>
<dbReference type="Proteomes" id="UP000002276">
    <property type="component" value="Chromosome"/>
</dbReference>
<dbReference type="GO" id="GO:0022627">
    <property type="term" value="C:cytosolic small ribosomal subunit"/>
    <property type="evidence" value="ECO:0007669"/>
    <property type="project" value="TreeGrafter"/>
</dbReference>
<dbReference type="GO" id="GO:0003729">
    <property type="term" value="F:mRNA binding"/>
    <property type="evidence" value="ECO:0007669"/>
    <property type="project" value="UniProtKB-UniRule"/>
</dbReference>
<dbReference type="GO" id="GO:0019843">
    <property type="term" value="F:rRNA binding"/>
    <property type="evidence" value="ECO:0007669"/>
    <property type="project" value="UniProtKB-UniRule"/>
</dbReference>
<dbReference type="GO" id="GO:0003735">
    <property type="term" value="F:structural constituent of ribosome"/>
    <property type="evidence" value="ECO:0007669"/>
    <property type="project" value="InterPro"/>
</dbReference>
<dbReference type="GO" id="GO:0006412">
    <property type="term" value="P:translation"/>
    <property type="evidence" value="ECO:0007669"/>
    <property type="project" value="UniProtKB-UniRule"/>
</dbReference>
<dbReference type="CDD" id="cd02412">
    <property type="entry name" value="KH-II_30S_S3"/>
    <property type="match status" value="1"/>
</dbReference>
<dbReference type="FunFam" id="3.30.300.20:FF:000001">
    <property type="entry name" value="30S ribosomal protein S3"/>
    <property type="match status" value="1"/>
</dbReference>
<dbReference type="Gene3D" id="3.30.300.20">
    <property type="match status" value="1"/>
</dbReference>
<dbReference type="Gene3D" id="3.30.1140.32">
    <property type="entry name" value="Ribosomal protein S3, C-terminal domain"/>
    <property type="match status" value="1"/>
</dbReference>
<dbReference type="HAMAP" id="MF_01309_B">
    <property type="entry name" value="Ribosomal_uS3_B"/>
    <property type="match status" value="1"/>
</dbReference>
<dbReference type="InterPro" id="IPR004087">
    <property type="entry name" value="KH_dom"/>
</dbReference>
<dbReference type="InterPro" id="IPR015946">
    <property type="entry name" value="KH_dom-like_a/b"/>
</dbReference>
<dbReference type="InterPro" id="IPR004044">
    <property type="entry name" value="KH_dom_type_2"/>
</dbReference>
<dbReference type="InterPro" id="IPR009019">
    <property type="entry name" value="KH_sf_prok-type"/>
</dbReference>
<dbReference type="InterPro" id="IPR036419">
    <property type="entry name" value="Ribosomal_S3_C_sf"/>
</dbReference>
<dbReference type="InterPro" id="IPR005704">
    <property type="entry name" value="Ribosomal_uS3_bac-typ"/>
</dbReference>
<dbReference type="InterPro" id="IPR001351">
    <property type="entry name" value="Ribosomal_uS3_C"/>
</dbReference>
<dbReference type="InterPro" id="IPR018280">
    <property type="entry name" value="Ribosomal_uS3_CS"/>
</dbReference>
<dbReference type="NCBIfam" id="TIGR01009">
    <property type="entry name" value="rpsC_bact"/>
    <property type="match status" value="1"/>
</dbReference>
<dbReference type="PANTHER" id="PTHR11760">
    <property type="entry name" value="30S/40S RIBOSOMAL PROTEIN S3"/>
    <property type="match status" value="1"/>
</dbReference>
<dbReference type="PANTHER" id="PTHR11760:SF19">
    <property type="entry name" value="SMALL RIBOSOMAL SUBUNIT PROTEIN US3C"/>
    <property type="match status" value="1"/>
</dbReference>
<dbReference type="Pfam" id="PF07650">
    <property type="entry name" value="KH_2"/>
    <property type="match status" value="1"/>
</dbReference>
<dbReference type="Pfam" id="PF00189">
    <property type="entry name" value="Ribosomal_S3_C"/>
    <property type="match status" value="1"/>
</dbReference>
<dbReference type="SMART" id="SM00322">
    <property type="entry name" value="KH"/>
    <property type="match status" value="1"/>
</dbReference>
<dbReference type="SUPFAM" id="SSF54814">
    <property type="entry name" value="Prokaryotic type KH domain (KH-domain type II)"/>
    <property type="match status" value="1"/>
</dbReference>
<dbReference type="SUPFAM" id="SSF54821">
    <property type="entry name" value="Ribosomal protein S3 C-terminal domain"/>
    <property type="match status" value="1"/>
</dbReference>
<dbReference type="PROSITE" id="PS50823">
    <property type="entry name" value="KH_TYPE_2"/>
    <property type="match status" value="1"/>
</dbReference>
<dbReference type="PROSITE" id="PS00548">
    <property type="entry name" value="RIBOSOMAL_S3"/>
    <property type="match status" value="1"/>
</dbReference>
<organism>
    <name type="scientific">Borrelia garinii subsp. bavariensis (strain ATCC BAA-2496 / DSM 23469 / PBi)</name>
    <name type="common">Borreliella bavariensis</name>
    <dbReference type="NCBI Taxonomy" id="290434"/>
    <lineage>
        <taxon>Bacteria</taxon>
        <taxon>Pseudomonadati</taxon>
        <taxon>Spirochaetota</taxon>
        <taxon>Spirochaetia</taxon>
        <taxon>Spirochaetales</taxon>
        <taxon>Borreliaceae</taxon>
        <taxon>Borreliella</taxon>
    </lineage>
</organism>
<accession>Q661D6</accession>
<reference key="1">
    <citation type="journal article" date="2004" name="Nucleic Acids Res.">
        <title>Comparative analysis of the Borrelia garinii genome.</title>
        <authorList>
            <person name="Gloeckner G."/>
            <person name="Lehmann R."/>
            <person name="Romualdi A."/>
            <person name="Pradella S."/>
            <person name="Schulte-Spechtel U."/>
            <person name="Schilhabel M."/>
            <person name="Wilske B."/>
            <person name="Suehnel J."/>
            <person name="Platzer M."/>
        </authorList>
    </citation>
    <scope>NUCLEOTIDE SEQUENCE [LARGE SCALE GENOMIC DNA]</scope>
    <source>
        <strain>ATCC BAA-2496 / DSM 23469 / PBi</strain>
    </source>
</reference>
<evidence type="ECO:0000255" key="1">
    <source>
        <dbReference type="HAMAP-Rule" id="MF_01309"/>
    </source>
</evidence>
<evidence type="ECO:0000256" key="2">
    <source>
        <dbReference type="SAM" id="MobiDB-lite"/>
    </source>
</evidence>
<evidence type="ECO:0000305" key="3"/>
<name>RS3_BORGP</name>
<proteinExistence type="inferred from homology"/>
<protein>
    <recommendedName>
        <fullName evidence="1">Small ribosomal subunit protein uS3</fullName>
    </recommendedName>
    <alternativeName>
        <fullName evidence="3">30S ribosomal protein S3</fullName>
    </alternativeName>
</protein>
<gene>
    <name evidence="1" type="primary">rpsC</name>
    <name type="ordered locus">BG0496</name>
</gene>
<sequence length="292" mass="32878">MGQKVHPYSLRVKINKDWKSKWYFDKKLYSTILHEDFLIRLEIMKFLKGIKFDISDIEIIRNNPQKVTVVIVTPRPGSVIGLKGSNLEKIGQLLTKKISKKISIKIKEVKRPELDAQIIANGIAKQVENRVSYRKVLKSSLSTSMLKGAQGLKIKIAGRLGGAEIARSFEVKEGRVPLHTLRANIDYGFSEAQTTYGIIGVKVWLFKGEVLGRQTNSDAGQVINKKPFRERGESVKNFDKILNNREKANERQSRAALNKKDGLSKDETGLLNKLGSSFSKERIDSNEQNIGG</sequence>
<feature type="chain" id="PRO_0000130081" description="Small ribosomal subunit protein uS3">
    <location>
        <begin position="1"/>
        <end position="292"/>
    </location>
</feature>
<feature type="domain" description="KH type-2" evidence="1">
    <location>
        <begin position="39"/>
        <end position="110"/>
    </location>
</feature>
<feature type="region of interest" description="Disordered" evidence="2">
    <location>
        <begin position="247"/>
        <end position="268"/>
    </location>
</feature>